<keyword id="KW-0002">3D-structure</keyword>
<keyword id="KW-0025">Alternative splicing</keyword>
<keyword id="KW-0175">Coiled coil</keyword>
<keyword id="KW-0963">Cytoplasm</keyword>
<keyword id="KW-0333">Golgi apparatus</keyword>
<keyword id="KW-0472">Membrane</keyword>
<keyword id="KW-0597">Phosphoprotein</keyword>
<keyword id="KW-0653">Protein transport</keyword>
<keyword id="KW-1267">Proteomics identification</keyword>
<keyword id="KW-1185">Reference proteome</keyword>
<keyword id="KW-0812">Transmembrane</keyword>
<keyword id="KW-1133">Transmembrane helix</keyword>
<keyword id="KW-0813">Transport</keyword>
<dbReference type="EMBL" id="AF008936">
    <property type="protein sequence ID" value="AAB69283.1"/>
    <property type="status" value="ALT_FRAME"/>
    <property type="molecule type" value="mRNA"/>
</dbReference>
<dbReference type="EMBL" id="AF008935">
    <property type="protein sequence ID" value="AAB69282.1"/>
    <property type="status" value="ALT_FRAME"/>
    <property type="molecule type" value="mRNA"/>
</dbReference>
<dbReference type="EMBL" id="AF008937">
    <property type="protein sequence ID" value="AAB69284.1"/>
    <property type="molecule type" value="mRNA"/>
</dbReference>
<dbReference type="EMBL" id="AF038897">
    <property type="protein sequence ID" value="AAC05647.1"/>
    <property type="status" value="ALT_FRAME"/>
    <property type="molecule type" value="mRNA"/>
</dbReference>
<dbReference type="EMBL" id="AL139349">
    <property type="status" value="NOT_ANNOTATED_CDS"/>
    <property type="molecule type" value="Genomic_DNA"/>
</dbReference>
<dbReference type="EMBL" id="AL050327">
    <property type="status" value="NOT_ANNOTATED_CDS"/>
    <property type="molecule type" value="Genomic_DNA"/>
</dbReference>
<dbReference type="EMBL" id="CH471077">
    <property type="protein sequence ID" value="EAW75481.1"/>
    <property type="molecule type" value="Genomic_DNA"/>
</dbReference>
<dbReference type="EMBL" id="CH471077">
    <property type="protein sequence ID" value="EAW75482.1"/>
    <property type="molecule type" value="Genomic_DNA"/>
</dbReference>
<dbReference type="EMBL" id="CH471077">
    <property type="protein sequence ID" value="EAW75484.1"/>
    <property type="molecule type" value="Genomic_DNA"/>
</dbReference>
<dbReference type="EMBL" id="CH471077">
    <property type="protein sequence ID" value="EAW75485.1"/>
    <property type="molecule type" value="Genomic_DNA"/>
</dbReference>
<dbReference type="EMBL" id="CH471077">
    <property type="protein sequence ID" value="EAW75486.1"/>
    <property type="molecule type" value="Genomic_DNA"/>
</dbReference>
<dbReference type="EMBL" id="BC019042">
    <property type="protein sequence ID" value="AAH19042.1"/>
    <property type="molecule type" value="mRNA"/>
</dbReference>
<dbReference type="EMBL" id="BC073876">
    <property type="protein sequence ID" value="AAH73876.1"/>
    <property type="molecule type" value="mRNA"/>
</dbReference>
<dbReference type="EMBL" id="BX396221">
    <property type="status" value="NOT_ANNOTATED_CDS"/>
    <property type="molecule type" value="mRNA"/>
</dbReference>
<dbReference type="CCDS" id="CCDS13468.1">
    <molecule id="O14662-1"/>
</dbReference>
<dbReference type="CCDS" id="CCDS13469.1">
    <molecule id="O14662-2"/>
</dbReference>
<dbReference type="CCDS" id="CCDS46619.1">
    <molecule id="O14662-5"/>
</dbReference>
<dbReference type="CCDS" id="CCDS46620.1">
    <molecule id="O14662-4"/>
</dbReference>
<dbReference type="CCDS" id="CCDS56199.1">
    <molecule id="O14662-6"/>
</dbReference>
<dbReference type="PIR" id="JC5927">
    <property type="entry name" value="JC5927"/>
</dbReference>
<dbReference type="RefSeq" id="NP_001001433.1">
    <molecule id="O14662-1"/>
    <property type="nucleotide sequence ID" value="NM_001001433.3"/>
</dbReference>
<dbReference type="RefSeq" id="NP_001128244.1">
    <molecule id="O14662-5"/>
    <property type="nucleotide sequence ID" value="NM_001134772.3"/>
</dbReference>
<dbReference type="RefSeq" id="NP_001128245.1">
    <molecule id="O14662-4"/>
    <property type="nucleotide sequence ID" value="NM_001134773.3"/>
</dbReference>
<dbReference type="RefSeq" id="NP_001191797.1">
    <molecule id="O14662-6"/>
    <property type="nucleotide sequence ID" value="NM_001204868.2"/>
</dbReference>
<dbReference type="RefSeq" id="NP_003754.2">
    <molecule id="O14662-2"/>
    <property type="nucleotide sequence ID" value="NM_003763.5"/>
</dbReference>
<dbReference type="PDB" id="8QQF">
    <property type="method" value="X-ray"/>
    <property type="resolution" value="2.19 A"/>
    <property type="chains" value="B/D=209-221"/>
</dbReference>
<dbReference type="PDBsum" id="8QQF"/>
<dbReference type="SMR" id="O14662"/>
<dbReference type="BioGRID" id="114223">
    <property type="interactions" value="77"/>
</dbReference>
<dbReference type="CORUM" id="O14662"/>
<dbReference type="DIP" id="DIP-57570N"/>
<dbReference type="FunCoup" id="O14662">
    <property type="interactions" value="2984"/>
</dbReference>
<dbReference type="IntAct" id="O14662">
    <property type="interactions" value="44"/>
</dbReference>
<dbReference type="MINT" id="O14662"/>
<dbReference type="STRING" id="9606.ENSP00000360183"/>
<dbReference type="GlyGen" id="O14662">
    <property type="glycosylation" value="1 site, 1 O-linked glycan (1 site)"/>
</dbReference>
<dbReference type="iPTMnet" id="O14662"/>
<dbReference type="PhosphoSitePlus" id="O14662"/>
<dbReference type="SwissPalm" id="O14662"/>
<dbReference type="BioMuta" id="STX16"/>
<dbReference type="jPOST" id="O14662"/>
<dbReference type="MassIVE" id="O14662"/>
<dbReference type="PaxDb" id="9606-ENSP00000360183"/>
<dbReference type="PeptideAtlas" id="O14662"/>
<dbReference type="ProteomicsDB" id="15209"/>
<dbReference type="ProteomicsDB" id="48155">
    <molecule id="O14662-1"/>
</dbReference>
<dbReference type="ProteomicsDB" id="48156">
    <molecule id="O14662-2"/>
</dbReference>
<dbReference type="ProteomicsDB" id="48157">
    <molecule id="O14662-3"/>
</dbReference>
<dbReference type="ProteomicsDB" id="48158">
    <molecule id="O14662-4"/>
</dbReference>
<dbReference type="ProteomicsDB" id="48159">
    <molecule id="O14662-5"/>
</dbReference>
<dbReference type="Pumba" id="O14662"/>
<dbReference type="Antibodypedia" id="29123">
    <property type="antibodies" value="177 antibodies from 27 providers"/>
</dbReference>
<dbReference type="DNASU" id="8675"/>
<dbReference type="Ensembl" id="ENST00000355957.9">
    <molecule id="O14662-4"/>
    <property type="protein sequence ID" value="ENSP00000348229.5"/>
    <property type="gene ID" value="ENSG00000124222.23"/>
</dbReference>
<dbReference type="Ensembl" id="ENST00000358029.8">
    <molecule id="O14662-5"/>
    <property type="protein sequence ID" value="ENSP00000350723.4"/>
    <property type="gene ID" value="ENSG00000124222.23"/>
</dbReference>
<dbReference type="Ensembl" id="ENST00000359617.8">
    <molecule id="O14662-6"/>
    <property type="protein sequence ID" value="ENSP00000352634.4"/>
    <property type="gene ID" value="ENSG00000124222.23"/>
</dbReference>
<dbReference type="Ensembl" id="ENST00000371132.8">
    <molecule id="O14662-2"/>
    <property type="protein sequence ID" value="ENSP00000360173.4"/>
    <property type="gene ID" value="ENSG00000124222.23"/>
</dbReference>
<dbReference type="Ensembl" id="ENST00000371141.8">
    <molecule id="O14662-1"/>
    <property type="protein sequence ID" value="ENSP00000360183.4"/>
    <property type="gene ID" value="ENSG00000124222.23"/>
</dbReference>
<dbReference type="Ensembl" id="ENST00000467096.5">
    <molecule id="O14662-3"/>
    <property type="protein sequence ID" value="ENSP00000434369.1"/>
    <property type="gene ID" value="ENSG00000124222.23"/>
</dbReference>
<dbReference type="GeneID" id="8675"/>
<dbReference type="KEGG" id="hsa:8675"/>
<dbReference type="MANE-Select" id="ENST00000371141.8">
    <property type="protein sequence ID" value="ENSP00000360183.4"/>
    <property type="RefSeq nucleotide sequence ID" value="NM_001001433.3"/>
    <property type="RefSeq protein sequence ID" value="NP_001001433.1"/>
</dbReference>
<dbReference type="UCSC" id="uc002xzi.4">
    <molecule id="O14662-1"/>
    <property type="organism name" value="human"/>
</dbReference>
<dbReference type="AGR" id="HGNC:11431"/>
<dbReference type="CTD" id="8675"/>
<dbReference type="DisGeNET" id="8675"/>
<dbReference type="GeneCards" id="STX16"/>
<dbReference type="GeneReviews" id="STX16"/>
<dbReference type="HGNC" id="HGNC:11431">
    <property type="gene designation" value="STX16"/>
</dbReference>
<dbReference type="HPA" id="ENSG00000124222">
    <property type="expression patterns" value="Low tissue specificity"/>
</dbReference>
<dbReference type="MalaCards" id="STX16"/>
<dbReference type="MIM" id="603233">
    <property type="type" value="phenotype"/>
</dbReference>
<dbReference type="MIM" id="603666">
    <property type="type" value="gene"/>
</dbReference>
<dbReference type="neXtProt" id="NX_O14662"/>
<dbReference type="OpenTargets" id="ENSG00000124222"/>
<dbReference type="Orphanet" id="94089">
    <property type="disease" value="Pseudohypoparathyroidism type 1B"/>
</dbReference>
<dbReference type="PharmGKB" id="PA36231"/>
<dbReference type="VEuPathDB" id="HostDB:ENSG00000124222"/>
<dbReference type="eggNOG" id="KOG0809">
    <property type="taxonomic scope" value="Eukaryota"/>
</dbReference>
<dbReference type="GeneTree" id="ENSGT01000000214440"/>
<dbReference type="HOGENOM" id="CLU_038177_3_0_1"/>
<dbReference type="InParanoid" id="O14662"/>
<dbReference type="OMA" id="NRKMCII"/>
<dbReference type="OrthoDB" id="10251371at2759"/>
<dbReference type="PAN-GO" id="O14662">
    <property type="GO annotations" value="8 GO annotations based on evolutionary models"/>
</dbReference>
<dbReference type="PhylomeDB" id="O14662"/>
<dbReference type="TreeFam" id="TF314090"/>
<dbReference type="PathwayCommons" id="O14662"/>
<dbReference type="Reactome" id="R-HSA-6811438">
    <property type="pathway name" value="Intra-Golgi traffic"/>
</dbReference>
<dbReference type="Reactome" id="R-HSA-6811440">
    <property type="pathway name" value="Retrograde transport at the Trans-Golgi-Network"/>
</dbReference>
<dbReference type="SignaLink" id="O14662"/>
<dbReference type="SIGNOR" id="O14662"/>
<dbReference type="BioGRID-ORCS" id="8675">
    <property type="hits" value="13 hits in 1159 CRISPR screens"/>
</dbReference>
<dbReference type="GeneWiki" id="STX16"/>
<dbReference type="GenomeRNAi" id="8675"/>
<dbReference type="Pharos" id="O14662">
    <property type="development level" value="Tbio"/>
</dbReference>
<dbReference type="PRO" id="PR:O14662"/>
<dbReference type="Proteomes" id="UP000005640">
    <property type="component" value="Chromosome 20"/>
</dbReference>
<dbReference type="RNAct" id="O14662">
    <property type="molecule type" value="protein"/>
</dbReference>
<dbReference type="Bgee" id="ENSG00000124222">
    <property type="expression patterns" value="Expressed in right uterine tube and 207 other cell types or tissues"/>
</dbReference>
<dbReference type="ExpressionAtlas" id="O14662">
    <property type="expression patterns" value="baseline and differential"/>
</dbReference>
<dbReference type="GO" id="GO:0005737">
    <property type="term" value="C:cytoplasm"/>
    <property type="evidence" value="ECO:0000314"/>
    <property type="project" value="UniProtKB"/>
</dbReference>
<dbReference type="GO" id="GO:0005829">
    <property type="term" value="C:cytosol"/>
    <property type="evidence" value="ECO:0000314"/>
    <property type="project" value="UniProtKB"/>
</dbReference>
<dbReference type="GO" id="GO:0012505">
    <property type="term" value="C:endomembrane system"/>
    <property type="evidence" value="ECO:0000318"/>
    <property type="project" value="GO_Central"/>
</dbReference>
<dbReference type="GO" id="GO:0005925">
    <property type="term" value="C:focal adhesion"/>
    <property type="evidence" value="ECO:0007005"/>
    <property type="project" value="UniProtKB"/>
</dbReference>
<dbReference type="GO" id="GO:0005794">
    <property type="term" value="C:Golgi apparatus"/>
    <property type="evidence" value="ECO:0000314"/>
    <property type="project" value="UniProtKB"/>
</dbReference>
<dbReference type="GO" id="GO:0031985">
    <property type="term" value="C:Golgi cisterna"/>
    <property type="evidence" value="ECO:0000314"/>
    <property type="project" value="UniProtKB"/>
</dbReference>
<dbReference type="GO" id="GO:0000139">
    <property type="term" value="C:Golgi membrane"/>
    <property type="evidence" value="ECO:0000304"/>
    <property type="project" value="Reactome"/>
</dbReference>
<dbReference type="GO" id="GO:0043231">
    <property type="term" value="C:intracellular membrane-bounded organelle"/>
    <property type="evidence" value="ECO:0000314"/>
    <property type="project" value="HPA"/>
</dbReference>
<dbReference type="GO" id="GO:0016020">
    <property type="term" value="C:membrane"/>
    <property type="evidence" value="ECO:0000314"/>
    <property type="project" value="UniProtKB"/>
</dbReference>
<dbReference type="GO" id="GO:0048471">
    <property type="term" value="C:perinuclear region of cytoplasm"/>
    <property type="evidence" value="ECO:0000314"/>
    <property type="project" value="UniProtKB"/>
</dbReference>
<dbReference type="GO" id="GO:0031201">
    <property type="term" value="C:SNARE complex"/>
    <property type="evidence" value="ECO:0000314"/>
    <property type="project" value="MGI"/>
</dbReference>
<dbReference type="GO" id="GO:0030672">
    <property type="term" value="C:synaptic vesicle membrane"/>
    <property type="evidence" value="ECO:0007669"/>
    <property type="project" value="Ensembl"/>
</dbReference>
<dbReference type="GO" id="GO:0005802">
    <property type="term" value="C:trans-Golgi network"/>
    <property type="evidence" value="ECO:0000314"/>
    <property type="project" value="UniProtKB"/>
</dbReference>
<dbReference type="GO" id="GO:0032588">
    <property type="term" value="C:trans-Golgi network membrane"/>
    <property type="evidence" value="ECO:0000304"/>
    <property type="project" value="Reactome"/>
</dbReference>
<dbReference type="GO" id="GO:0005484">
    <property type="term" value="F:SNAP receptor activity"/>
    <property type="evidence" value="ECO:0000314"/>
    <property type="project" value="HGNC-UCL"/>
</dbReference>
<dbReference type="GO" id="GO:0000149">
    <property type="term" value="F:SNARE binding"/>
    <property type="evidence" value="ECO:0000318"/>
    <property type="project" value="GO_Central"/>
</dbReference>
<dbReference type="GO" id="GO:0019905">
    <property type="term" value="F:syntaxin binding"/>
    <property type="evidence" value="ECO:0000353"/>
    <property type="project" value="UniProtKB"/>
</dbReference>
<dbReference type="GO" id="GO:0032456">
    <property type="term" value="P:endocytic recycling"/>
    <property type="evidence" value="ECO:0000315"/>
    <property type="project" value="UniProtKB"/>
</dbReference>
<dbReference type="GO" id="GO:0006886">
    <property type="term" value="P:intracellular protein transport"/>
    <property type="evidence" value="ECO:0000318"/>
    <property type="project" value="GO_Central"/>
</dbReference>
<dbReference type="GO" id="GO:0042147">
    <property type="term" value="P:retrograde transport, endosome to Golgi"/>
    <property type="evidence" value="ECO:0000314"/>
    <property type="project" value="UniProtKB"/>
</dbReference>
<dbReference type="GO" id="GO:0048278">
    <property type="term" value="P:vesicle docking"/>
    <property type="evidence" value="ECO:0000318"/>
    <property type="project" value="GO_Central"/>
</dbReference>
<dbReference type="GO" id="GO:0006906">
    <property type="term" value="P:vesicle fusion"/>
    <property type="evidence" value="ECO:0000318"/>
    <property type="project" value="GO_Central"/>
</dbReference>
<dbReference type="CDD" id="cd15845">
    <property type="entry name" value="SNARE_syntaxin16"/>
    <property type="match status" value="1"/>
</dbReference>
<dbReference type="FunFam" id="1.20.58.70:FF:000002">
    <property type="entry name" value="syntaxin-16 isoform X2"/>
    <property type="match status" value="1"/>
</dbReference>
<dbReference type="Gene3D" id="1.20.58.70">
    <property type="match status" value="1"/>
</dbReference>
<dbReference type="InterPro" id="IPR010989">
    <property type="entry name" value="SNARE"/>
</dbReference>
<dbReference type="InterPro" id="IPR045242">
    <property type="entry name" value="Syntaxin"/>
</dbReference>
<dbReference type="InterPro" id="IPR006012">
    <property type="entry name" value="Syntaxin/epimorphin_CS"/>
</dbReference>
<dbReference type="InterPro" id="IPR000727">
    <property type="entry name" value="T_SNARE_dom"/>
</dbReference>
<dbReference type="PANTHER" id="PTHR19957">
    <property type="entry name" value="SYNTAXIN"/>
    <property type="match status" value="1"/>
</dbReference>
<dbReference type="PANTHER" id="PTHR19957:SF83">
    <property type="entry name" value="SYNTAXIN-16"/>
    <property type="match status" value="1"/>
</dbReference>
<dbReference type="Pfam" id="PF05739">
    <property type="entry name" value="SNARE"/>
    <property type="match status" value="1"/>
</dbReference>
<dbReference type="SMART" id="SM00397">
    <property type="entry name" value="t_SNARE"/>
    <property type="match status" value="1"/>
</dbReference>
<dbReference type="SUPFAM" id="SSF47661">
    <property type="entry name" value="t-snare proteins"/>
    <property type="match status" value="1"/>
</dbReference>
<dbReference type="PROSITE" id="PS00914">
    <property type="entry name" value="SYNTAXIN"/>
    <property type="match status" value="1"/>
</dbReference>
<dbReference type="PROSITE" id="PS50192">
    <property type="entry name" value="T_SNARE"/>
    <property type="match status" value="1"/>
</dbReference>
<feature type="chain" id="PRO_0000210226" description="Syntaxin-16">
    <location>
        <begin position="1"/>
        <end position="325"/>
    </location>
</feature>
<feature type="topological domain" description="Cytoplasmic" evidence="2">
    <location>
        <begin position="1"/>
        <end position="301"/>
    </location>
</feature>
<feature type="transmembrane region" description="Helical; Anchor for type IV membrane protein" evidence="2">
    <location>
        <begin position="302"/>
        <end position="322"/>
    </location>
</feature>
<feature type="topological domain" description="Vesicular" evidence="2">
    <location>
        <begin position="323"/>
        <end position="325"/>
    </location>
</feature>
<feature type="domain" description="t-SNARE coiled-coil homology" evidence="3">
    <location>
        <begin position="230"/>
        <end position="292"/>
    </location>
</feature>
<feature type="modified residue" description="Phosphoserine" evidence="1">
    <location>
        <position position="41"/>
    </location>
</feature>
<feature type="splice variant" id="VSP_045073" description="In isoform 6." evidence="11">
    <location>
        <begin position="1"/>
        <end position="53"/>
    </location>
</feature>
<feature type="splice variant" id="VSP_006348" description="In isoform A." evidence="8 10">
    <location>
        <begin position="28"/>
        <end position="48"/>
    </location>
</feature>
<feature type="splice variant" id="VSP_006349" description="In isoform C and isoform D." evidence="9 10">
    <location>
        <begin position="28"/>
        <end position="44"/>
    </location>
</feature>
<feature type="splice variant" id="VSP_043849" description="In isoform E." evidence="8">
    <location>
        <begin position="45"/>
        <end position="48"/>
    </location>
</feature>
<feature type="splice variant" id="VSP_006350" description="In isoform C." evidence="10">
    <original>L</original>
    <variation>A</variation>
    <location>
        <position position="132"/>
    </location>
</feature>
<feature type="splice variant" id="VSP_006351" description="In isoform C." evidence="10">
    <location>
        <begin position="133"/>
        <end position="325"/>
    </location>
</feature>
<feature type="sequence conflict" description="In Ref. 1; AAB69282/AAB69283." evidence="12" ref="1">
    <original>L</original>
    <variation>S</variation>
    <location>
        <position position="99"/>
    </location>
</feature>
<feature type="sequence conflict" description="In Ref. 1; AAC05647." evidence="12" ref="1">
    <original>A</original>
    <variation>E</variation>
    <location>
        <position position="147"/>
    </location>
</feature>
<feature type="sequence conflict" description="In Ref. 1; AAB69282/AAB69283." evidence="12" ref="1">
    <original>I</original>
    <variation>M</variation>
    <location>
        <position position="243"/>
    </location>
</feature>
<sequence>MATRRLTDAFLLLRNNSIQNRQLLAEQVSSHITSSPLHSRSIAAELDELADDRMALVSGISLDPEAAIGVTKRPPPKWVDGVDEIQYDVGRIKQKMKELASLHDKHLNRPTLDDSSEEEHAIEITTQEITQLFHRCQRAVQALPSRARACSEQEGRLLGNVVASLAQALQELSTSFRHAQSGYLKRMKNREERSQHFFDTSVPLMDDGDDNTLYHRGFTEDQLVLVEQNTLMVEEREREIRQIVQSISDLNEIFRDLGAMIVEQGTVLDRIDYNVEQSCIKTEDGLKQLHKAEQYQKKNRKMLVILILFVIIIVLIVVLVGVKSR</sequence>
<reference key="1">
    <citation type="journal article" date="1998" name="Eur. J. Cell Biol.">
        <title>Syntaxin-16, a putative Golgi t-SNARE.</title>
        <authorList>
            <person name="Simonsen A."/>
            <person name="Bremnes B."/>
            <person name="Ronning E."/>
            <person name="Aasland R."/>
            <person name="Stenmark H."/>
        </authorList>
    </citation>
    <scope>NUCLEOTIDE SEQUENCE [MRNA] (ISOFORMS A; B; C AND D)</scope>
    <source>
        <tissue>Brain</tissue>
    </source>
</reference>
<reference key="2">
    <citation type="journal article" date="1998" name="Biochem. Biophys. Res. Commun.">
        <title>Molecular cloning and localization of human syntaxin 16, a member of the syntaxin family of SNARE proteins.</title>
        <authorList>
            <person name="Tang B.L."/>
            <person name="Low D.Y.H."/>
            <person name="Lee S.S."/>
            <person name="Tan A.E.H."/>
            <person name="Ho W."/>
        </authorList>
    </citation>
    <scope>NUCLEOTIDE SEQUENCE [MRNA] (ISOFORM D)</scope>
</reference>
<reference key="3">
    <citation type="journal article" date="2001" name="Nature">
        <title>The DNA sequence and comparative analysis of human chromosome 20.</title>
        <authorList>
            <person name="Deloukas P."/>
            <person name="Matthews L.H."/>
            <person name="Ashurst J.L."/>
            <person name="Burton J."/>
            <person name="Gilbert J.G.R."/>
            <person name="Jones M."/>
            <person name="Stavrides G."/>
            <person name="Almeida J.P."/>
            <person name="Babbage A.K."/>
            <person name="Bagguley C.L."/>
            <person name="Bailey J."/>
            <person name="Barlow K.F."/>
            <person name="Bates K.N."/>
            <person name="Beard L.M."/>
            <person name="Beare D.M."/>
            <person name="Beasley O.P."/>
            <person name="Bird C.P."/>
            <person name="Blakey S.E."/>
            <person name="Bridgeman A.M."/>
            <person name="Brown A.J."/>
            <person name="Buck D."/>
            <person name="Burrill W.D."/>
            <person name="Butler A.P."/>
            <person name="Carder C."/>
            <person name="Carter N.P."/>
            <person name="Chapman J.C."/>
            <person name="Clamp M."/>
            <person name="Clark G."/>
            <person name="Clark L.N."/>
            <person name="Clark S.Y."/>
            <person name="Clee C.M."/>
            <person name="Clegg S."/>
            <person name="Cobley V.E."/>
            <person name="Collier R.E."/>
            <person name="Connor R.E."/>
            <person name="Corby N.R."/>
            <person name="Coulson A."/>
            <person name="Coville G.J."/>
            <person name="Deadman R."/>
            <person name="Dhami P.D."/>
            <person name="Dunn M."/>
            <person name="Ellington A.G."/>
            <person name="Frankland J.A."/>
            <person name="Fraser A."/>
            <person name="French L."/>
            <person name="Garner P."/>
            <person name="Grafham D.V."/>
            <person name="Griffiths C."/>
            <person name="Griffiths M.N.D."/>
            <person name="Gwilliam R."/>
            <person name="Hall R.E."/>
            <person name="Hammond S."/>
            <person name="Harley J.L."/>
            <person name="Heath P.D."/>
            <person name="Ho S."/>
            <person name="Holden J.L."/>
            <person name="Howden P.J."/>
            <person name="Huckle E."/>
            <person name="Hunt A.R."/>
            <person name="Hunt S.E."/>
            <person name="Jekosch K."/>
            <person name="Johnson C.M."/>
            <person name="Johnson D."/>
            <person name="Kay M.P."/>
            <person name="Kimberley A.M."/>
            <person name="King A."/>
            <person name="Knights A."/>
            <person name="Laird G.K."/>
            <person name="Lawlor S."/>
            <person name="Lehvaeslaiho M.H."/>
            <person name="Leversha M.A."/>
            <person name="Lloyd C."/>
            <person name="Lloyd D.M."/>
            <person name="Lovell J.D."/>
            <person name="Marsh V.L."/>
            <person name="Martin S.L."/>
            <person name="McConnachie L.J."/>
            <person name="McLay K."/>
            <person name="McMurray A.A."/>
            <person name="Milne S.A."/>
            <person name="Mistry D."/>
            <person name="Moore M.J.F."/>
            <person name="Mullikin J.C."/>
            <person name="Nickerson T."/>
            <person name="Oliver K."/>
            <person name="Parker A."/>
            <person name="Patel R."/>
            <person name="Pearce T.A.V."/>
            <person name="Peck A.I."/>
            <person name="Phillimore B.J.C.T."/>
            <person name="Prathalingam S.R."/>
            <person name="Plumb R.W."/>
            <person name="Ramsay H."/>
            <person name="Rice C.M."/>
            <person name="Ross M.T."/>
            <person name="Scott C.E."/>
            <person name="Sehra H.K."/>
            <person name="Shownkeen R."/>
            <person name="Sims S."/>
            <person name="Skuce C.D."/>
            <person name="Smith M.L."/>
            <person name="Soderlund C."/>
            <person name="Steward C.A."/>
            <person name="Sulston J.E."/>
            <person name="Swann R.M."/>
            <person name="Sycamore N."/>
            <person name="Taylor R."/>
            <person name="Tee L."/>
            <person name="Thomas D.W."/>
            <person name="Thorpe A."/>
            <person name="Tracey A."/>
            <person name="Tromans A.C."/>
            <person name="Vaudin M."/>
            <person name="Wall M."/>
            <person name="Wallis J.M."/>
            <person name="Whitehead S.L."/>
            <person name="Whittaker P."/>
            <person name="Willey D.L."/>
            <person name="Williams L."/>
            <person name="Williams S.A."/>
            <person name="Wilming L."/>
            <person name="Wray P.W."/>
            <person name="Hubbard T."/>
            <person name="Durbin R.M."/>
            <person name="Bentley D.R."/>
            <person name="Beck S."/>
            <person name="Rogers J."/>
        </authorList>
    </citation>
    <scope>NUCLEOTIDE SEQUENCE [LARGE SCALE GENOMIC DNA]</scope>
</reference>
<reference key="4">
    <citation type="submission" date="2005-09" db="EMBL/GenBank/DDBJ databases">
        <authorList>
            <person name="Mural R.J."/>
            <person name="Istrail S."/>
            <person name="Sutton G.G."/>
            <person name="Florea L."/>
            <person name="Halpern A.L."/>
            <person name="Mobarry C.M."/>
            <person name="Lippert R."/>
            <person name="Walenz B."/>
            <person name="Shatkay H."/>
            <person name="Dew I."/>
            <person name="Miller J.R."/>
            <person name="Flanigan M.J."/>
            <person name="Edwards N.J."/>
            <person name="Bolanos R."/>
            <person name="Fasulo D."/>
            <person name="Halldorsson B.V."/>
            <person name="Hannenhalli S."/>
            <person name="Turner R."/>
            <person name="Yooseph S."/>
            <person name="Lu F."/>
            <person name="Nusskern D.R."/>
            <person name="Shue B.C."/>
            <person name="Zheng X.H."/>
            <person name="Zhong F."/>
            <person name="Delcher A.L."/>
            <person name="Huson D.H."/>
            <person name="Kravitz S.A."/>
            <person name="Mouchard L."/>
            <person name="Reinert K."/>
            <person name="Remington K.A."/>
            <person name="Clark A.G."/>
            <person name="Waterman M.S."/>
            <person name="Eichler E.E."/>
            <person name="Adams M.D."/>
            <person name="Hunkapiller M.W."/>
            <person name="Myers E.W."/>
            <person name="Venter J.C."/>
        </authorList>
    </citation>
    <scope>NUCLEOTIDE SEQUENCE [LARGE SCALE GENOMIC DNA]</scope>
</reference>
<reference key="5">
    <citation type="journal article" date="2004" name="Genome Res.">
        <title>The status, quality, and expansion of the NIH full-length cDNA project: the Mammalian Gene Collection (MGC).</title>
        <authorList>
            <consortium name="The MGC Project Team"/>
        </authorList>
    </citation>
    <scope>NUCLEOTIDE SEQUENCE [LARGE SCALE MRNA] (ISOFORMS A AND E)</scope>
    <source>
        <tissue>Kidney</tissue>
    </source>
</reference>
<reference key="6">
    <citation type="submission" date="2003-04" db="EMBL/GenBank/DDBJ databases">
        <title>Full-length cDNA libraries and normalization.</title>
        <authorList>
            <person name="Li W.B."/>
            <person name="Gruber C."/>
            <person name="Jessee J."/>
            <person name="Polayes D."/>
        </authorList>
    </citation>
    <scope>NUCLEOTIDE SEQUENCE [LARGE SCALE MRNA] OF 1-251 (ISOFORM 6)</scope>
    <source>
        <tissue>Placenta</tissue>
    </source>
</reference>
<reference key="7">
    <citation type="journal article" date="2003" name="J. Clin. Invest.">
        <title>Autosomal dominant pseudohypoparathyroidism type Ib is associated with a heterozygous microdeletion that likely disrupts a putative imprinting control element of GNAS.</title>
        <authorList>
            <person name="Bastepe M."/>
            <person name="Froehlich L.F."/>
            <person name="Hendy G.N."/>
            <person name="Indridason O.S."/>
            <person name="Josse R.G."/>
            <person name="Koshiyama H."/>
            <person name="Koerkkoe J."/>
            <person name="Nakamoto J.M."/>
            <person name="Rosenbloom A.L."/>
            <person name="Slyper A.H."/>
            <person name="Sugimoto T."/>
            <person name="Tsatsoulis A."/>
            <person name="Crawford J.D."/>
            <person name="Jueppner H."/>
        </authorList>
    </citation>
    <scope>INVOLVEMENT IN PHP1B</scope>
</reference>
<reference key="8">
    <citation type="journal article" date="2005" name="Am. J. Hum. Genet.">
        <title>A novel STX16 deletion in autosomal dominant pseudohypoparathyroidism type Ib redefines the boundaries of a cis-acting imprinting control element of GNAS.</title>
        <authorList>
            <person name="Linglart A."/>
            <person name="Gensure R.C."/>
            <person name="Olney R.C."/>
            <person name="Jueppner H."/>
            <person name="Bastepe M."/>
        </authorList>
    </citation>
    <scope>INVOLVEMENT IN PHP1B</scope>
</reference>
<reference key="9">
    <citation type="journal article" date="2008" name="J. Cell Biol.">
        <title>A syntaxin 10-SNARE complex distinguishes two distinct transport routes from endosomes to the trans-Golgi in human cells.</title>
        <authorList>
            <person name="Ganley I.G."/>
            <person name="Espinosa E."/>
            <person name="Pfeffer S.R."/>
        </authorList>
    </citation>
    <scope>FUNCTION</scope>
    <scope>INTERACTION WITH GCC2</scope>
</reference>
<reference key="10">
    <citation type="journal article" date="2017" name="J. Cell Biol.">
        <title>BAIAP3, a C2 domain-containing Munc13 protein, controls the fate of dense-core vesicles in neuroendocrine cells.</title>
        <authorList>
            <person name="Zhang X."/>
            <person name="Jiang S."/>
            <person name="Mitok K.A."/>
            <person name="Li L."/>
            <person name="Attie A.D."/>
            <person name="Martin T.F.J."/>
        </authorList>
    </citation>
    <scope>INTERACTION WITH BAIAP3</scope>
</reference>
<organism>
    <name type="scientific">Homo sapiens</name>
    <name type="common">Human</name>
    <dbReference type="NCBI Taxonomy" id="9606"/>
    <lineage>
        <taxon>Eukaryota</taxon>
        <taxon>Metazoa</taxon>
        <taxon>Chordata</taxon>
        <taxon>Craniata</taxon>
        <taxon>Vertebrata</taxon>
        <taxon>Euteleostomi</taxon>
        <taxon>Mammalia</taxon>
        <taxon>Eutheria</taxon>
        <taxon>Euarchontoglires</taxon>
        <taxon>Primates</taxon>
        <taxon>Haplorrhini</taxon>
        <taxon>Catarrhini</taxon>
        <taxon>Hominidae</taxon>
        <taxon>Homo</taxon>
    </lineage>
</organism>
<evidence type="ECO:0000250" key="1">
    <source>
        <dbReference type="UniProtKB" id="Q8BVI5"/>
    </source>
</evidence>
<evidence type="ECO:0000255" key="2"/>
<evidence type="ECO:0000255" key="3">
    <source>
        <dbReference type="PROSITE-ProRule" id="PRU00202"/>
    </source>
</evidence>
<evidence type="ECO:0000269" key="4">
    <source>
    </source>
</evidence>
<evidence type="ECO:0000269" key="5">
    <source>
    </source>
</evidence>
<evidence type="ECO:0000269" key="6">
    <source>
    </source>
</evidence>
<evidence type="ECO:0000269" key="7">
    <source>
    </source>
</evidence>
<evidence type="ECO:0000303" key="8">
    <source>
    </source>
</evidence>
<evidence type="ECO:0000303" key="9">
    <source>
    </source>
</evidence>
<evidence type="ECO:0000303" key="10">
    <source>
    </source>
</evidence>
<evidence type="ECO:0000303" key="11">
    <source ref="6"/>
</evidence>
<evidence type="ECO:0000305" key="12"/>
<accession>O14662</accession>
<accession>A6NK32</accession>
<accession>A6NN69</accession>
<accession>A8MPP0</accession>
<accession>B7ZBN1</accession>
<accession>B7ZBN2</accession>
<accession>B7ZBN3</accession>
<accession>E1P5M0</accession>
<accession>E1P607</accession>
<accession>O14661</accession>
<accession>O14663</accession>
<accession>O60517</accession>
<accession>Q5W084</accession>
<accession>Q5W086</accession>
<accession>Q5W087</accession>
<accession>Q5XKI6</accession>
<accession>Q6GMS8</accession>
<accession>Q9H0Z0</accession>
<accession>Q9H1T7</accession>
<accession>Q9H1T8</accession>
<accession>Q9UIX5</accession>
<protein>
    <recommendedName>
        <fullName>Syntaxin-16</fullName>
        <shortName>Syn16</shortName>
    </recommendedName>
</protein>
<name>STX16_HUMAN</name>
<gene>
    <name type="primary">STX16</name>
</gene>
<proteinExistence type="evidence at protein level"/>
<comment type="function">
    <text evidence="6">SNARE involved in vesicular transport from the late endosomes to the trans-Golgi network.</text>
</comment>
<comment type="subunit">
    <text evidence="6 7">Interacts with GCC2 (PubMed:18195106). Interacts with BAIAP3; this interaction is increased in the presence of calcium (PubMed:28626000).</text>
</comment>
<comment type="interaction">
    <interactant intactId="EBI-2853548">
        <id>O14662</id>
    </interactant>
    <interactant intactId="EBI-748397">
        <id>P50222</id>
        <label>MEOX2</label>
    </interactant>
    <organismsDiffer>false</organismsDiffer>
    <experiments>3</experiments>
</comment>
<comment type="interaction">
    <interactant intactId="EBI-2853548">
        <id>O14662</id>
    </interactant>
    <interactant intactId="EBI-3921185">
        <id>Q9H115</id>
        <label>NAPB</label>
    </interactant>
    <organismsDiffer>false</organismsDiffer>
    <experiments>3</experiments>
</comment>
<comment type="interaction">
    <interactant intactId="EBI-2853548">
        <id>O14662</id>
    </interactant>
    <interactant intactId="EBI-744942">
        <id>Q12846</id>
        <label>STX4</label>
    </interactant>
    <organismsDiffer>false</organismsDiffer>
    <experiments>3</experiments>
</comment>
<comment type="interaction">
    <interactant intactId="EBI-2853548">
        <id>O14662</id>
    </interactant>
    <interactant intactId="EBI-10191195">
        <id>O95183</id>
        <label>VAMP5</label>
    </interactant>
    <organismsDiffer>false</organismsDiffer>
    <experiments>5</experiments>
</comment>
<comment type="interaction">
    <interactant intactId="EBI-2853548">
        <id>O14662</id>
    </interactant>
    <interactant intactId="EBI-1782543">
        <id>Q9NRW7</id>
        <label>VPS45</label>
    </interactant>
    <organismsDiffer>false</organismsDiffer>
    <experiments>3</experiments>
</comment>
<comment type="interaction">
    <interactant intactId="EBI-9089968">
        <id>O14662-5</id>
    </interactant>
    <interactant intactId="EBI-77613">
        <id>P05067</id>
        <label>APP</label>
    </interactant>
    <organismsDiffer>false</organismsDiffer>
    <experiments>3</experiments>
</comment>
<comment type="interaction">
    <interactant intactId="EBI-9089968">
        <id>O14662-5</id>
    </interactant>
    <interactant intactId="EBI-466029">
        <id>P42858</id>
        <label>HTT</label>
    </interactant>
    <organismsDiffer>false</organismsDiffer>
    <experiments>15</experiments>
</comment>
<comment type="interaction">
    <interactant intactId="EBI-9089968">
        <id>O14662-5</id>
    </interactant>
    <interactant intactId="EBI-3921185">
        <id>Q9H115</id>
        <label>NAPB</label>
    </interactant>
    <organismsDiffer>false</organismsDiffer>
    <experiments>3</experiments>
</comment>
<comment type="interaction">
    <interactant intactId="EBI-9089968">
        <id>O14662-5</id>
    </interactant>
    <interactant intactId="EBI-490676">
        <id>O95721</id>
        <label>SNAP29</label>
    </interactant>
    <organismsDiffer>false</organismsDiffer>
    <experiments>3</experiments>
</comment>
<comment type="interaction">
    <interactant intactId="EBI-9089968">
        <id>O14662-5</id>
    </interactant>
    <interactant intactId="EBI-712466">
        <id>Q16623</id>
        <label>STX1A</label>
    </interactant>
    <organismsDiffer>false</organismsDiffer>
    <experiments>3</experiments>
</comment>
<comment type="interaction">
    <interactant intactId="EBI-9089968">
        <id>O14662-5</id>
    </interactant>
    <interactant intactId="EBI-11956649">
        <id>P32856-2</id>
        <label>STX2</label>
    </interactant>
    <organismsDiffer>false</organismsDiffer>
    <experiments>3</experiments>
</comment>
<comment type="interaction">
    <interactant intactId="EBI-9089968">
        <id>O14662-5</id>
    </interactant>
    <interactant intactId="EBI-744942">
        <id>Q12846</id>
        <label>STX4</label>
    </interactant>
    <organismsDiffer>false</organismsDiffer>
    <experiments>3</experiments>
</comment>
<comment type="interaction">
    <interactant intactId="EBI-9089968">
        <id>O14662-5</id>
    </interactant>
    <interactant intactId="EBI-744953">
        <id>O75379</id>
        <label>VAMP4</label>
    </interactant>
    <organismsDiffer>false</organismsDiffer>
    <experiments>3</experiments>
</comment>
<comment type="interaction">
    <interactant intactId="EBI-9089968">
        <id>O14662-5</id>
    </interactant>
    <interactant intactId="EBI-10191195">
        <id>O95183</id>
        <label>VAMP5</label>
    </interactant>
    <organismsDiffer>false</organismsDiffer>
    <experiments>3</experiments>
</comment>
<comment type="interaction">
    <interactant intactId="EBI-9089968">
        <id>O14662-5</id>
    </interactant>
    <interactant intactId="EBI-1782543">
        <id>Q9NRW7</id>
        <label>VPS45</label>
    </interactant>
    <organismsDiffer>false</organismsDiffer>
    <experiments>3</experiments>
</comment>
<comment type="subcellular location">
    <subcellularLocation>
        <location>Golgi apparatus membrane</location>
        <topology>Single-pass type IV membrane protein</topology>
    </subcellularLocation>
</comment>
<comment type="subcellular location">
    <molecule>Isoform C</molecule>
    <subcellularLocation>
        <location>Cytoplasm</location>
    </subcellularLocation>
</comment>
<comment type="alternative products">
    <event type="alternative splicing"/>
    <isoform>
        <id>O14662-1</id>
        <name>B</name>
        <sequence type="displayed"/>
    </isoform>
    <isoform>
        <id>O14662-2</id>
        <name>A</name>
        <sequence type="described" ref="VSP_006348"/>
    </isoform>
    <isoform>
        <id>O14662-3</id>
        <name>C</name>
        <sequence type="described" ref="VSP_006349 VSP_006350 VSP_006351"/>
    </isoform>
    <isoform>
        <id>O14662-4</id>
        <name>D</name>
        <sequence type="described" ref="VSP_006349"/>
    </isoform>
    <isoform>
        <id>O14662-5</id>
        <name>E</name>
        <sequence type="described" ref="VSP_043849"/>
    </isoform>
    <isoform>
        <id>O14662-6</id>
        <name>6</name>
        <sequence type="described" ref="VSP_045073"/>
    </isoform>
</comment>
<comment type="tissue specificity">
    <text>Ubiquitous.</text>
</comment>
<comment type="disease" evidence="4 5">
    <disease id="DI-02817">
        <name>Pseudohypoparathyroidism 1B</name>
        <acronym>PHP1B</acronym>
        <description>A disorder characterized by end-organ resistance to parathyroid hormone, hypocalcemia and hyperphosphatemia. Patients affected with PHP1B lack developmental defects characteristic of Albright hereditary osteodystrophy, and typically show no other endocrine abnormalities besides resistance to PTH.</description>
        <dbReference type="MIM" id="603233"/>
    </disease>
    <text>The gene represented in this entry is involved in disease pathogenesis. Microdeletions involving STX16 can cause loss of methylation at exon A/B of GNAS, resulting in PHP1B.</text>
</comment>
<comment type="miscellaneous">
    <molecule>Isoform C</molecule>
    <text evidence="12">May be produced at very low levels due to a premature stop codon in the mRNA, leading to nonsense-mediated mRNA decay.</text>
</comment>
<comment type="similarity">
    <text evidence="12">Belongs to the syntaxin family.</text>
</comment>
<comment type="sequence caution" evidence="12">
    <conflict type="frameshift">
        <sequence resource="EMBL-CDS" id="AAB69282"/>
    </conflict>
</comment>
<comment type="sequence caution" evidence="12">
    <conflict type="frameshift">
        <sequence resource="EMBL-CDS" id="AAB69283"/>
    </conflict>
</comment>
<comment type="sequence caution" evidence="12">
    <conflict type="frameshift">
        <sequence resource="EMBL-CDS" id="AAC05647"/>
    </conflict>
</comment>